<gene>
    <name type="primary">gdhB</name>
    <name type="ordered locus">PA3068</name>
</gene>
<organism>
    <name type="scientific">Pseudomonas aeruginosa (strain ATCC 15692 / DSM 22644 / CIP 104116 / JCM 14847 / LMG 12228 / 1C / PRS 101 / PAO1)</name>
    <dbReference type="NCBI Taxonomy" id="208964"/>
    <lineage>
        <taxon>Bacteria</taxon>
        <taxon>Pseudomonadati</taxon>
        <taxon>Pseudomonadota</taxon>
        <taxon>Gammaproteobacteria</taxon>
        <taxon>Pseudomonadales</taxon>
        <taxon>Pseudomonadaceae</taxon>
        <taxon>Pseudomonas</taxon>
    </lineage>
</organism>
<reference key="1">
    <citation type="journal article" date="2001" name="J. Bacteriol.">
        <title>The gdhB gene of Pseudomonas aeruginosa encodes an arginine-inducible NAD(+)-dependent glutamate dehydrogenase which is subject to allosteric regulation.</title>
        <authorList>
            <person name="Lu C.D."/>
            <person name="Abdelal A.T."/>
        </authorList>
    </citation>
    <scope>NUCLEOTIDE SEQUENCE [GENOMIC DNA]</scope>
    <scope>PROTEIN SEQUENCE OF 2-11</scope>
    <scope>FUNCTION</scope>
    <scope>CATALYTIC ACTIVITY</scope>
    <scope>ACTIVITY REGULATION</scope>
    <scope>BIOPHYSICOCHEMICAL PROPERTIES</scope>
    <scope>SUBUNIT</scope>
    <scope>INDUCTION</scope>
    <scope>DISRUPTION PHENOTYPE</scope>
</reference>
<reference key="2">
    <citation type="journal article" date="2000" name="Nature">
        <title>Complete genome sequence of Pseudomonas aeruginosa PAO1, an opportunistic pathogen.</title>
        <authorList>
            <person name="Stover C.K."/>
            <person name="Pham X.-Q.T."/>
            <person name="Erwin A.L."/>
            <person name="Mizoguchi S.D."/>
            <person name="Warrener P."/>
            <person name="Hickey M.J."/>
            <person name="Brinkman F.S.L."/>
            <person name="Hufnagle W.O."/>
            <person name="Kowalik D.J."/>
            <person name="Lagrou M."/>
            <person name="Garber R.L."/>
            <person name="Goltry L."/>
            <person name="Tolentino E."/>
            <person name="Westbrock-Wadman S."/>
            <person name="Yuan Y."/>
            <person name="Brody L.L."/>
            <person name="Coulter S.N."/>
            <person name="Folger K.R."/>
            <person name="Kas A."/>
            <person name="Larbig K."/>
            <person name="Lim R.M."/>
            <person name="Smith K.A."/>
            <person name="Spencer D.H."/>
            <person name="Wong G.K.-S."/>
            <person name="Wu Z."/>
            <person name="Paulsen I.T."/>
            <person name="Reizer J."/>
            <person name="Saier M.H. Jr."/>
            <person name="Hancock R.E.W."/>
            <person name="Lory S."/>
            <person name="Olson M.V."/>
        </authorList>
    </citation>
    <scope>NUCLEOTIDE SEQUENCE [LARGE SCALE GENOMIC DNA]</scope>
    <source>
        <strain>ATCC 15692 / DSM 22644 / CIP 104116 / JCM 14847 / LMG 12228 / 1C / PRS 101 / PAO1</strain>
    </source>
</reference>
<reference key="3">
    <citation type="journal article" date="1997" name="J. Bacteriol.">
        <title>Cloning and characterization of argR, a gene that participates in regulation of arginine biosynthesis and catabolism in Pseudomonas aeruginosa PAO1.</title>
        <authorList>
            <person name="Park S.-M."/>
            <person name="Lu C.-D."/>
            <person name="Abdelal A.T."/>
        </authorList>
    </citation>
    <scope>INDUCTION BY ARGININE</scope>
</reference>
<protein>
    <recommendedName>
        <fullName evidence="5">NAD-specific glutamate dehydrogenase</fullName>
        <shortName evidence="4">NAD-GDH</shortName>
        <ecNumber evidence="2">1.4.1.2</ecNumber>
    </recommendedName>
    <alternativeName>
        <fullName evidence="4">NAD(+)-dependent glutamate dehydrogenase</fullName>
    </alternativeName>
</protein>
<name>DHE2_PSEAE</name>
<dbReference type="EC" id="1.4.1.2" evidence="2"/>
<dbReference type="EMBL" id="AF315586">
    <property type="protein sequence ID" value="AAG53963.1"/>
    <property type="molecule type" value="Genomic_DNA"/>
</dbReference>
<dbReference type="EMBL" id="AE004091">
    <property type="protein sequence ID" value="AAG06456.1"/>
    <property type="molecule type" value="Genomic_DNA"/>
</dbReference>
<dbReference type="PIR" id="E83261">
    <property type="entry name" value="E83261"/>
</dbReference>
<dbReference type="RefSeq" id="NP_251758.1">
    <property type="nucleotide sequence ID" value="NC_002516.2"/>
</dbReference>
<dbReference type="RefSeq" id="WP_003103491.1">
    <property type="nucleotide sequence ID" value="NZ_QZGE01000009.1"/>
</dbReference>
<dbReference type="SMR" id="Q9HZE0"/>
<dbReference type="STRING" id="208964.PA3068"/>
<dbReference type="PaxDb" id="208964-PA3068"/>
<dbReference type="GeneID" id="878664"/>
<dbReference type="KEGG" id="pae:PA3068"/>
<dbReference type="PATRIC" id="fig|208964.12.peg.3219"/>
<dbReference type="PseudoCAP" id="PA3068"/>
<dbReference type="HOGENOM" id="CLU_003404_1_1_6"/>
<dbReference type="InParanoid" id="Q9HZE0"/>
<dbReference type="OrthoDB" id="9758052at2"/>
<dbReference type="PhylomeDB" id="Q9HZE0"/>
<dbReference type="BioCyc" id="PAER208964:G1FZ6-3121-MONOMER"/>
<dbReference type="Proteomes" id="UP000002438">
    <property type="component" value="Chromosome"/>
</dbReference>
<dbReference type="GO" id="GO:0004352">
    <property type="term" value="F:glutamate dehydrogenase (NAD+) activity"/>
    <property type="evidence" value="ECO:0000314"/>
    <property type="project" value="CACAO"/>
</dbReference>
<dbReference type="GO" id="GO:0004069">
    <property type="term" value="F:L-aspartate:2-oxoglutarate aminotransferase activity"/>
    <property type="evidence" value="ECO:0007669"/>
    <property type="project" value="InterPro"/>
</dbReference>
<dbReference type="GO" id="GO:0006538">
    <property type="term" value="P:glutamate catabolic process"/>
    <property type="evidence" value="ECO:0007669"/>
    <property type="project" value="InterPro"/>
</dbReference>
<dbReference type="Gene3D" id="3.40.50.720">
    <property type="entry name" value="NAD(P)-binding Rossmann-like Domain"/>
    <property type="match status" value="1"/>
</dbReference>
<dbReference type="InterPro" id="IPR046346">
    <property type="entry name" value="Aminoacid_DH-like_N_sf"/>
</dbReference>
<dbReference type="InterPro" id="IPR048381">
    <property type="entry name" value="GDH_C"/>
</dbReference>
<dbReference type="InterPro" id="IPR036291">
    <property type="entry name" value="NAD(P)-bd_dom_sf"/>
</dbReference>
<dbReference type="InterPro" id="IPR028971">
    <property type="entry name" value="NAD-GDH_cat"/>
</dbReference>
<dbReference type="InterPro" id="IPR049062">
    <property type="entry name" value="NAD_Glu_DH_ACT2"/>
</dbReference>
<dbReference type="InterPro" id="IPR049064">
    <property type="entry name" value="NAD_Glu_DH_ACT3"/>
</dbReference>
<dbReference type="InterPro" id="IPR007780">
    <property type="entry name" value="NAD_Glu_DH_bac"/>
</dbReference>
<dbReference type="InterPro" id="IPR049059">
    <property type="entry name" value="NAD_Glu_DH_HM1"/>
</dbReference>
<dbReference type="InterPro" id="IPR049058">
    <property type="entry name" value="NAD_Glu_DH_HM2"/>
</dbReference>
<dbReference type="InterPro" id="IPR049056">
    <property type="entry name" value="NAD_Glu_DH_HM3"/>
</dbReference>
<dbReference type="InterPro" id="IPR024727">
    <property type="entry name" value="NAD_Glu_DH_N_ACT1"/>
</dbReference>
<dbReference type="PANTHER" id="PTHR43403">
    <property type="entry name" value="NAD-SPECIFIC GLUTAMATE DEHYDROGENASE"/>
    <property type="match status" value="1"/>
</dbReference>
<dbReference type="PANTHER" id="PTHR43403:SF1">
    <property type="entry name" value="NAD-SPECIFIC GLUTAMATE DEHYDROGENASE"/>
    <property type="match status" value="1"/>
</dbReference>
<dbReference type="Pfam" id="PF05088">
    <property type="entry name" value="Bac_GDH_CD"/>
    <property type="match status" value="1"/>
</dbReference>
<dbReference type="Pfam" id="PF21075">
    <property type="entry name" value="GDH_ACT1"/>
    <property type="match status" value="1"/>
</dbReference>
<dbReference type="Pfam" id="PF21076">
    <property type="entry name" value="GDH_ACT2"/>
    <property type="match status" value="1"/>
</dbReference>
<dbReference type="Pfam" id="PF21077">
    <property type="entry name" value="GDH_ACT3"/>
    <property type="match status" value="1"/>
</dbReference>
<dbReference type="Pfam" id="PF21074">
    <property type="entry name" value="GDH_C"/>
    <property type="match status" value="1"/>
</dbReference>
<dbReference type="Pfam" id="PF21073">
    <property type="entry name" value="GDH_HM1"/>
    <property type="match status" value="1"/>
</dbReference>
<dbReference type="Pfam" id="PF21079">
    <property type="entry name" value="GDH_HM2"/>
    <property type="match status" value="1"/>
</dbReference>
<dbReference type="Pfam" id="PF21078">
    <property type="entry name" value="GDH_HM3"/>
    <property type="match status" value="1"/>
</dbReference>
<dbReference type="PIRSF" id="PIRSF036761">
    <property type="entry name" value="GDH_Mll4104"/>
    <property type="match status" value="1"/>
</dbReference>
<dbReference type="SUPFAM" id="SSF53223">
    <property type="entry name" value="Aminoacid dehydrogenase-like, N-terminal domain"/>
    <property type="match status" value="1"/>
</dbReference>
<dbReference type="SUPFAM" id="SSF51735">
    <property type="entry name" value="NAD(P)-binding Rossmann-fold domains"/>
    <property type="match status" value="1"/>
</dbReference>
<keyword id="KW-0903">Direct protein sequencing</keyword>
<keyword id="KW-1015">Disulfide bond</keyword>
<keyword id="KW-0520">NAD</keyword>
<keyword id="KW-0560">Oxidoreductase</keyword>
<keyword id="KW-1185">Reference proteome</keyword>
<comment type="function">
    <text evidence="2">Involved in arginine catabolism by converting L-glutamate, into 2-oxoglutarate, which is then channeled into the tricarboxylic acid cycle. Can also utilize other amino acids of the glutamate family.</text>
</comment>
<comment type="catalytic activity">
    <reaction evidence="2">
        <text>L-glutamate + NAD(+) + H2O = 2-oxoglutarate + NH4(+) + NADH + H(+)</text>
        <dbReference type="Rhea" id="RHEA:15133"/>
        <dbReference type="ChEBI" id="CHEBI:15377"/>
        <dbReference type="ChEBI" id="CHEBI:15378"/>
        <dbReference type="ChEBI" id="CHEBI:16810"/>
        <dbReference type="ChEBI" id="CHEBI:28938"/>
        <dbReference type="ChEBI" id="CHEBI:29985"/>
        <dbReference type="ChEBI" id="CHEBI:57540"/>
        <dbReference type="ChEBI" id="CHEBI:57945"/>
        <dbReference type="EC" id="1.4.1.2"/>
    </reaction>
</comment>
<comment type="activity regulation">
    <text evidence="2">Activity subject to allosteric control by arginine and citrate, which function as positive and negative effectors, respectively.</text>
</comment>
<comment type="biophysicochemical properties">
    <kinetics>
        <KM evidence="2">0.13 uM for NAD</KM>
    </kinetics>
    <phDependence>
        <text evidence="2">Optimum pH is 8 for amination, and 9 for deamination.</text>
    </phDependence>
</comment>
<comment type="subunit">
    <text evidence="2">Homotetramer.</text>
</comment>
<comment type="induction">
    <text evidence="2 3">Expression induced by arginine in an ArgR-dependent manner (27-fold). Induced to a much lesser extent by ornithine, glutamate, and aspartate (1.7- to 5-fold).</text>
</comment>
<comment type="PTM">
    <text evidence="5">Contains disulfide bonds (interchain).</text>
</comment>
<comment type="disruption phenotype">
    <text evidence="2">Reduced growth when arginine serve as the sole source of carbon and nitrogen.</text>
</comment>
<comment type="similarity">
    <text evidence="5">Belongs to the Glu/Leu/Phe/Val dehydrogenases family.</text>
</comment>
<proteinExistence type="evidence at protein level"/>
<accession>Q9HZE0</accession>
<accession>Q7BHF2</accession>
<feature type="initiator methionine" description="Removed" evidence="2">
    <location>
        <position position="1"/>
    </location>
</feature>
<feature type="chain" id="PRO_0000393369" description="NAD-specific glutamate dehydrogenase">
    <location>
        <begin position="2"/>
        <end position="1620"/>
    </location>
</feature>
<feature type="active site" evidence="1">
    <location>
        <position position="851"/>
    </location>
</feature>
<sequence length="1620" mass="182638">MAFFTAASKADFQHQLQTALAQHLGDKALPQVTLFAEQFFSLISLDELTQRRLSDLVGCTLSAWRLLERFDRDQPEVRVYNPDYEKHGWQSTHTAVEVLHPDLPFLVDSVRMELNRRGYSIHTLQTNVLSVRRSAKGELKEILPKGSQGKDVSQESLMYLEIDRCAHAGELRALEKAILEVLGEVRVTVADFEPMKAKARELLTWLGKAKLKVPAEELKEVRSYLEWLLDNHFTFLGYEEFSVADEADGGRMVYDEKSFLGLTRLLRAGLSKDDLHIEDYAVAYLREPVLLSFAKAAHPSRVHRPAYPDYVSIRELDGKGRVIRECRFMGLFTSSVYNESVNDIPFIRGKVAEVMRRSGFDTKAHLGKELAQVLEVLPRDDLFQTPVDELFSTALAIVRIQERNKIRVFLRKDPYGRFCYCLAYVPRDVYSTETRLKIQQVLMERLQASDCEFWTFFSESVLARVQFILRVDPKSRIDIDPARLEEEVIQACRSWQDDYSSLVVENLGEAKGTNVLADFPKGFPAGYRERFAPHFAVVDLQHLLSLSEQRPLVMSFYQPLAQGEQQLHCKLYHADTPLALSDVLPILENLGLRVLGEFPYRLRHQNGREYWIHDFAFTYAEGLDVDIQQLNEILQDAFVHIVSGDAENDAFNRLVLTANLPWRDVALLRAYARYLKQIRLGFDLGYIASALNAHTDIARELVRLFKTRFYLARKLTAEDLEDKQQKLEQAILGALDEVQVLNEDRILRRYLDLIKATLRTNFYQPDGNGQNKSYFSFKFNPKAIPELPRPVPKYEIFVYSPRVEGVHLRGGKVARGGLRWSDREEDFRTEVLGLVKAQQVKNAVIVPVGAKGGFVPRRLPLGGSRDEIQAEAIACYRIFISGLLDITDNLKEGEVVPPANVVRHDEDDPYLVVAADKGTATFSDIANGIAAEYGFWLGDAFASGGSAGYDHKGMGITAKGAWVSVQRHFRERGIDVQKDNISVIGIGDMAGDVFGNGLLMSDKLQLVAAFNHMHIFIDPNPDAASSFVERQRLFNLPRSSWADYDAKLISAGGGIFLRSAKSIAITPEMKARFDIQADRLAPTELIHALLKAPVDLLWNGGIGTYVKSSKETHADVGDKANDGLRVDGRELRAKVVGEGGNLGMTQLARVEFGLHGGANNTDFIDNAGGVDCSDHEVNIKILLNEVVQAGDMTEKQRNALLVKMTDAVGALVLGNNYKQTQALSLAQRRARERIAEYKRLMGDLEARGKLDRALEFLPSDEELAERISAGQGLTRAELSVLISYSKIDLKESLLKSLVPDDDYLTRDMETAFPALLAEKFGDAMRRHRLKREIVSTQIANDLVNHMGITFVQRLKESTGMSAANVAGAYVIVRDVFHLPHWFRQIENLDYQVPADIQLTLMDELMRLGRRATRWFLRSRRNELDAARDVAHFGPRIAALGLKLNELLEGPTRELWQARYQTYVDAGVPELLARMVAGTSHLYTLLPIIEASDVTGQDTAEVAKAYFAVGSALDLTWYLQQITNLPVENNWQALAREAFRDDLDWQQRAITVSVLQMQDGPKEVEARVGLWLEQHLPLVERWRAMLVELRAASGTDYAMYAVANRELMDLAQSSQHGVCIP</sequence>
<evidence type="ECO:0000250" key="1"/>
<evidence type="ECO:0000269" key="2">
    <source>
    </source>
</evidence>
<evidence type="ECO:0000269" key="3">
    <source>
    </source>
</evidence>
<evidence type="ECO:0000303" key="4">
    <source>
    </source>
</evidence>
<evidence type="ECO:0000305" key="5"/>